<evidence type="ECO:0000250" key="1"/>
<evidence type="ECO:0000250" key="2">
    <source>
        <dbReference type="UniProtKB" id="Q9HWF9"/>
    </source>
</evidence>
<evidence type="ECO:0000255" key="3">
    <source>
        <dbReference type="PROSITE-ProRule" id="PRU00085"/>
    </source>
</evidence>
<evidence type="ECO:0000305" key="4"/>
<keyword id="KW-0349">Heme</keyword>
<keyword id="KW-0406">Ion transport</keyword>
<keyword id="KW-0408">Iron</keyword>
<keyword id="KW-0409">Iron storage</keyword>
<keyword id="KW-0410">Iron transport</keyword>
<keyword id="KW-0479">Metal-binding</keyword>
<keyword id="KW-0560">Oxidoreductase</keyword>
<keyword id="KW-0813">Transport</keyword>
<dbReference type="EC" id="1.16.3.1"/>
<dbReference type="EMBL" id="U19760">
    <property type="protein sequence ID" value="AAC43322.1"/>
    <property type="molecule type" value="Genomic_DNA"/>
</dbReference>
<dbReference type="EMBL" id="AE008918">
    <property type="protein sequence ID" value="AAL53946.1"/>
    <property type="molecule type" value="Genomic_DNA"/>
</dbReference>
<dbReference type="PIR" id="AG3597">
    <property type="entry name" value="AG3597"/>
</dbReference>
<dbReference type="PIR" id="S68771">
    <property type="entry name" value="S68771"/>
</dbReference>
<dbReference type="RefSeq" id="WP_004686876.1">
    <property type="nucleotide sequence ID" value="NC_003318.1"/>
</dbReference>
<dbReference type="SMR" id="P49944"/>
<dbReference type="GeneID" id="29595661"/>
<dbReference type="KEGG" id="bme:BMEII0704"/>
<dbReference type="KEGG" id="bmel:DK63_2538"/>
<dbReference type="PATRIC" id="fig|224914.52.peg.2660"/>
<dbReference type="eggNOG" id="COG2193">
    <property type="taxonomic scope" value="Bacteria"/>
</dbReference>
<dbReference type="PhylomeDB" id="P49944"/>
<dbReference type="Proteomes" id="UP000000419">
    <property type="component" value="Chromosome II"/>
</dbReference>
<dbReference type="GO" id="GO:0005829">
    <property type="term" value="C:cytosol"/>
    <property type="evidence" value="ECO:0007669"/>
    <property type="project" value="TreeGrafter"/>
</dbReference>
<dbReference type="GO" id="GO:0008199">
    <property type="term" value="F:ferric iron binding"/>
    <property type="evidence" value="ECO:0007669"/>
    <property type="project" value="InterPro"/>
</dbReference>
<dbReference type="GO" id="GO:0004322">
    <property type="term" value="F:ferroxidase activity"/>
    <property type="evidence" value="ECO:0007669"/>
    <property type="project" value="UniProtKB-EC"/>
</dbReference>
<dbReference type="GO" id="GO:0020037">
    <property type="term" value="F:heme binding"/>
    <property type="evidence" value="ECO:0007669"/>
    <property type="project" value="TreeGrafter"/>
</dbReference>
<dbReference type="GO" id="GO:0006879">
    <property type="term" value="P:intracellular iron ion homeostasis"/>
    <property type="evidence" value="ECO:0007669"/>
    <property type="project" value="UniProtKB-KW"/>
</dbReference>
<dbReference type="GO" id="GO:0006826">
    <property type="term" value="P:iron ion transport"/>
    <property type="evidence" value="ECO:0007669"/>
    <property type="project" value="UniProtKB-KW"/>
</dbReference>
<dbReference type="CDD" id="cd00907">
    <property type="entry name" value="Bacterioferritin"/>
    <property type="match status" value="1"/>
</dbReference>
<dbReference type="Gene3D" id="1.20.1260.10">
    <property type="match status" value="1"/>
</dbReference>
<dbReference type="InterPro" id="IPR002024">
    <property type="entry name" value="Bacterioferritin"/>
</dbReference>
<dbReference type="InterPro" id="IPR012347">
    <property type="entry name" value="Ferritin-like"/>
</dbReference>
<dbReference type="InterPro" id="IPR009040">
    <property type="entry name" value="Ferritin-like_diiron"/>
</dbReference>
<dbReference type="InterPro" id="IPR009078">
    <property type="entry name" value="Ferritin-like_SF"/>
</dbReference>
<dbReference type="InterPro" id="IPR008331">
    <property type="entry name" value="Ferritin_DPS_dom"/>
</dbReference>
<dbReference type="NCBIfam" id="TIGR00754">
    <property type="entry name" value="bfr"/>
    <property type="match status" value="1"/>
</dbReference>
<dbReference type="PANTHER" id="PTHR30295">
    <property type="entry name" value="BACTERIOFERRITIN"/>
    <property type="match status" value="1"/>
</dbReference>
<dbReference type="PANTHER" id="PTHR30295:SF0">
    <property type="entry name" value="BACTERIOFERRITIN"/>
    <property type="match status" value="1"/>
</dbReference>
<dbReference type="Pfam" id="PF00210">
    <property type="entry name" value="Ferritin"/>
    <property type="match status" value="1"/>
</dbReference>
<dbReference type="PIRSF" id="PIRSF002560">
    <property type="entry name" value="Bacterioferritin"/>
    <property type="match status" value="1"/>
</dbReference>
<dbReference type="PRINTS" id="PR00601">
    <property type="entry name" value="BACFERRITIN"/>
</dbReference>
<dbReference type="SUPFAM" id="SSF47240">
    <property type="entry name" value="Ferritin-like"/>
    <property type="match status" value="1"/>
</dbReference>
<dbReference type="PROSITE" id="PS00549">
    <property type="entry name" value="BACTERIOFERRITIN"/>
    <property type="match status" value="1"/>
</dbReference>
<dbReference type="PROSITE" id="PS50905">
    <property type="entry name" value="FERRITIN_LIKE"/>
    <property type="match status" value="1"/>
</dbReference>
<name>BFR_BRUME</name>
<organism>
    <name type="scientific">Brucella melitensis biotype 1 (strain ATCC 23456 / CCUG 17765 / NCTC 10094 / 16M)</name>
    <dbReference type="NCBI Taxonomy" id="224914"/>
    <lineage>
        <taxon>Bacteria</taxon>
        <taxon>Pseudomonadati</taxon>
        <taxon>Pseudomonadota</taxon>
        <taxon>Alphaproteobacteria</taxon>
        <taxon>Hyphomicrobiales</taxon>
        <taxon>Brucellaceae</taxon>
        <taxon>Brucella/Ochrobactrum group</taxon>
        <taxon>Brucella</taxon>
    </lineage>
</organism>
<protein>
    <recommendedName>
        <fullName>Bacterioferritin</fullName>
        <shortName>BFR</shortName>
        <ecNumber>1.16.3.1</ecNumber>
    </recommendedName>
</protein>
<comment type="function">
    <text evidence="1">Iron-storage protein, whose ferroxidase center binds Fe(2+), oxidizes it using dioxygen to Fe(3+), and participates in the subsequent Fe(3+) oxide mineral core formation within the central cavity of the BFR protein shell.</text>
</comment>
<comment type="catalytic activity">
    <reaction>
        <text>4 Fe(2+) + O2 + 4 H(+) = 4 Fe(3+) + 2 H2O</text>
        <dbReference type="Rhea" id="RHEA:11148"/>
        <dbReference type="ChEBI" id="CHEBI:15377"/>
        <dbReference type="ChEBI" id="CHEBI:15378"/>
        <dbReference type="ChEBI" id="CHEBI:15379"/>
        <dbReference type="ChEBI" id="CHEBI:29033"/>
        <dbReference type="ChEBI" id="CHEBI:29034"/>
        <dbReference type="EC" id="1.16.3.1"/>
    </reaction>
</comment>
<comment type="catalytic activity">
    <reaction evidence="2">
        <text>Fe(2+)(in) = Fe(2+)(out)</text>
        <dbReference type="Rhea" id="RHEA:28486"/>
        <dbReference type="ChEBI" id="CHEBI:29033"/>
    </reaction>
</comment>
<comment type="cofactor">
    <cofactor evidence="1">
        <name>heme b</name>
        <dbReference type="ChEBI" id="CHEBI:60344"/>
    </cofactor>
    <text evidence="1">Binds 1 heme b (iron(II)-protoporphyrin IX) group per dimer.</text>
</comment>
<comment type="subunit">
    <text evidence="1">Homooligomer of 24 subunits, arranged as 12 dimers, that are packed together to form an approximately spherical molecule with a central cavity, in which large amounts of iron can be deposited.</text>
</comment>
<comment type="similarity">
    <text evidence="4">Belongs to the bacterioferritin family.</text>
</comment>
<gene>
    <name type="primary">bfr</name>
    <name type="ordered locus">BMEII0704</name>
</gene>
<proteinExistence type="inferred from homology"/>
<sequence length="161" mass="18659">MKGEPKVIERLNDALFLELGAVNQYWLHYRLLNDWGYTRLAKKEREESIEEMHHADKLINRIIFFEGFPNLQTVSPLRIGQNVKEVLEADLKGEYDARASYKESREICDKLGDYVSKQLFDELLADEEGHIDFLETQLDLLAKIGEERYGQLNAAPADEAE</sequence>
<accession>P49944</accession>
<feature type="chain" id="PRO_0000192589" description="Bacterioferritin">
    <location>
        <begin position="1"/>
        <end position="161"/>
    </location>
</feature>
<feature type="domain" description="Ferritin-like diiron" evidence="3">
    <location>
        <begin position="1"/>
        <end position="145"/>
    </location>
</feature>
<feature type="binding site" evidence="3">
    <location>
        <position position="18"/>
    </location>
    <ligand>
        <name>Fe cation</name>
        <dbReference type="ChEBI" id="CHEBI:24875"/>
        <label>1</label>
    </ligand>
</feature>
<feature type="binding site" evidence="3">
    <location>
        <position position="51"/>
    </location>
    <ligand>
        <name>Fe cation</name>
        <dbReference type="ChEBI" id="CHEBI:24875"/>
        <label>1</label>
    </ligand>
</feature>
<feature type="binding site" evidence="3">
    <location>
        <position position="51"/>
    </location>
    <ligand>
        <name>Fe cation</name>
        <dbReference type="ChEBI" id="CHEBI:24875"/>
        <label>2</label>
    </ligand>
</feature>
<feature type="binding site" description="axial binding residue" evidence="3">
    <location>
        <position position="52"/>
    </location>
    <ligand>
        <name>heme b</name>
        <dbReference type="ChEBI" id="CHEBI:60344"/>
        <note>ligand shared between dimeric partners</note>
    </ligand>
    <ligandPart>
        <name>Fe</name>
        <dbReference type="ChEBI" id="CHEBI:18248"/>
    </ligandPart>
</feature>
<feature type="binding site" evidence="3">
    <location>
        <position position="54"/>
    </location>
    <ligand>
        <name>Fe cation</name>
        <dbReference type="ChEBI" id="CHEBI:24875"/>
        <label>1</label>
    </ligand>
</feature>
<feature type="binding site" evidence="3">
    <location>
        <position position="94"/>
    </location>
    <ligand>
        <name>Fe cation</name>
        <dbReference type="ChEBI" id="CHEBI:24875"/>
        <label>2</label>
    </ligand>
</feature>
<feature type="binding site" evidence="3">
    <location>
        <position position="127"/>
    </location>
    <ligand>
        <name>Fe cation</name>
        <dbReference type="ChEBI" id="CHEBI:24875"/>
        <label>1</label>
    </ligand>
</feature>
<feature type="binding site" evidence="3">
    <location>
        <position position="127"/>
    </location>
    <ligand>
        <name>Fe cation</name>
        <dbReference type="ChEBI" id="CHEBI:24875"/>
        <label>2</label>
    </ligand>
</feature>
<feature type="binding site" evidence="3">
    <location>
        <position position="130"/>
    </location>
    <ligand>
        <name>Fe cation</name>
        <dbReference type="ChEBI" id="CHEBI:24875"/>
        <label>2</label>
    </ligand>
</feature>
<reference key="1">
    <citation type="journal article" date="1995" name="FEBS Lett.">
        <title>Cloning and sequencing of the bacterioferritin gene of Brucella melitensis 16M strain.</title>
        <authorList>
            <person name="Denoel P.A."/>
            <person name="Zygmunt M.S."/>
            <person name="Weynants V.E."/>
            <person name="Tibor A."/>
            <person name="Lichtfouse B."/>
            <person name="Briffeuil P."/>
            <person name="Limet J.N."/>
            <person name="Letesson J.J."/>
        </authorList>
    </citation>
    <scope>NUCLEOTIDE SEQUENCE [GENOMIC DNA]</scope>
    <source>
        <strain>ATCC 23456 / CCUG 17765 / NCTC 10094 / 16M</strain>
    </source>
</reference>
<reference key="2">
    <citation type="journal article" date="2002" name="Proc. Natl. Acad. Sci. U.S.A.">
        <title>The genome sequence of the facultative intracellular pathogen Brucella melitensis.</title>
        <authorList>
            <person name="DelVecchio V.G."/>
            <person name="Kapatral V."/>
            <person name="Redkar R.J."/>
            <person name="Patra G."/>
            <person name="Mujer C."/>
            <person name="Los T."/>
            <person name="Ivanova N."/>
            <person name="Anderson I."/>
            <person name="Bhattacharyya A."/>
            <person name="Lykidis A."/>
            <person name="Reznik G."/>
            <person name="Jablonski L."/>
            <person name="Larsen N."/>
            <person name="D'Souza M."/>
            <person name="Bernal A."/>
            <person name="Mazur M."/>
            <person name="Goltsman E."/>
            <person name="Selkov E."/>
            <person name="Elzer P.H."/>
            <person name="Hagius S."/>
            <person name="O'Callaghan D."/>
            <person name="Letesson J.-J."/>
            <person name="Haselkorn R."/>
            <person name="Kyrpides N.C."/>
            <person name="Overbeek R."/>
        </authorList>
    </citation>
    <scope>NUCLEOTIDE SEQUENCE [LARGE SCALE GENOMIC DNA]</scope>
    <source>
        <strain>ATCC 23456 / CCUG 17765 / NCTC 10094 / 16M</strain>
    </source>
</reference>